<evidence type="ECO:0000250" key="1">
    <source>
        <dbReference type="UniProtKB" id="P14678"/>
    </source>
</evidence>
<evidence type="ECO:0000250" key="2">
    <source>
        <dbReference type="UniProtKB" id="P27048"/>
    </source>
</evidence>
<evidence type="ECO:0000250" key="3">
    <source>
        <dbReference type="UniProtKB" id="P63162"/>
    </source>
</evidence>
<evidence type="ECO:0000255" key="4">
    <source>
        <dbReference type="PROSITE-ProRule" id="PRU01346"/>
    </source>
</evidence>
<evidence type="ECO:0000256" key="5">
    <source>
        <dbReference type="SAM" id="MobiDB-lite"/>
    </source>
</evidence>
<evidence type="ECO:0000305" key="6"/>
<protein>
    <recommendedName>
        <fullName>Small nuclear ribonucleoprotein-associated protein B'</fullName>
        <shortName>snRNP-B'</shortName>
        <shortName>snRPB'</shortName>
    </recommendedName>
    <alternativeName>
        <fullName>Sm protein B'</fullName>
        <shortName>Sm-B'</shortName>
        <shortName>SmB'</shortName>
    </alternativeName>
</protein>
<name>RSMB_MONDO</name>
<gene>
    <name type="primary">SNRPB</name>
</gene>
<proteinExistence type="evidence at transcript level"/>
<reference key="1">
    <citation type="journal article" date="1999" name="Nucleic Acids Res.">
        <title>Concerted regulation and molecular evolution of the duplicated SNRPB'/B and SNRPN loci.</title>
        <authorList>
            <person name="Gray T.A."/>
            <person name="Smithwick M.J."/>
            <person name="Schaldach M.A."/>
            <person name="Martone D.L."/>
            <person name="Graves J.A."/>
            <person name="McCarrey J.R."/>
            <person name="Nicholls R.D."/>
        </authorList>
    </citation>
    <scope>NUCLEOTIDE SEQUENCE [MRNA]</scope>
</reference>
<sequence>MTVGKSSKMLQHIDCRMRCILQDGRIFIGTFKAFDKHMNLILCDCDEFRKIKPKNSKQAEREEKRVLGLVLLRGENLVSMTVEGPPPKDTGIARVPLAGAAGGPGIGRAAGRGVPAGVPMPQAPAGLAGPIRGVGGPSQQVMTPQGRGTVAAAAAAATASIAGAPTQYPSGRGGPPPPMGRGAPPPGMMAPPPGMRPPMGPPMGMPPGRGAPMGMPPPGMRPPPPGMRGPPPPGMRPPRP</sequence>
<keyword id="KW-0963">Cytoplasm</keyword>
<keyword id="KW-0488">Methylation</keyword>
<keyword id="KW-0507">mRNA processing</keyword>
<keyword id="KW-0508">mRNA splicing</keyword>
<keyword id="KW-0539">Nucleus</keyword>
<keyword id="KW-1185">Reference proteome</keyword>
<keyword id="KW-0677">Repeat</keyword>
<keyword id="KW-0687">Ribonucleoprotein</keyword>
<keyword id="KW-0694">RNA-binding</keyword>
<keyword id="KW-0747">Spliceosome</keyword>
<accession>Q9TU66</accession>
<feature type="chain" id="PRO_0000125518" description="Small nuclear ribonucleoprotein-associated protein B'">
    <location>
        <begin position="1"/>
        <end position="240"/>
    </location>
</feature>
<feature type="domain" description="Sm" evidence="4">
    <location>
        <begin position="4"/>
        <end position="86"/>
    </location>
</feature>
<feature type="repeat">
    <location>
        <begin position="175"/>
        <end position="181"/>
    </location>
</feature>
<feature type="repeat">
    <location>
        <begin position="191"/>
        <end position="196"/>
    </location>
</feature>
<feature type="repeat">
    <location>
        <begin position="216"/>
        <end position="221"/>
    </location>
</feature>
<feature type="repeat">
    <location>
        <begin position="222"/>
        <end position="228"/>
    </location>
</feature>
<feature type="repeat">
    <location>
        <begin position="230"/>
        <end position="236"/>
    </location>
</feature>
<feature type="region of interest" description="Disordered" evidence="5">
    <location>
        <begin position="163"/>
        <end position="240"/>
    </location>
</feature>
<feature type="region of interest" description="Repeat-rich region">
    <location>
        <begin position="175"/>
        <end position="236"/>
    </location>
</feature>
<feature type="compositionally biased region" description="Pro residues" evidence="5">
    <location>
        <begin position="174"/>
        <end position="205"/>
    </location>
</feature>
<feature type="compositionally biased region" description="Pro residues" evidence="5">
    <location>
        <begin position="214"/>
        <end position="240"/>
    </location>
</feature>
<feature type="modified residue" description="Asymmetric dimethylarginine; alternate" evidence="1">
    <location>
        <position position="108"/>
    </location>
</feature>
<feature type="modified residue" description="Dimethylated arginine; alternate" evidence="1">
    <location>
        <position position="108"/>
    </location>
</feature>
<feature type="modified residue" description="Omega-N-methylarginine; alternate" evidence="1">
    <location>
        <position position="108"/>
    </location>
</feature>
<feature type="modified residue" description="Asymmetric dimethylarginine; alternate" evidence="1">
    <location>
        <position position="112"/>
    </location>
</feature>
<feature type="modified residue" description="Dimethylated arginine; alternate" evidence="1">
    <location>
        <position position="112"/>
    </location>
</feature>
<feature type="modified residue" description="Omega-N-methylarginine; alternate" evidence="1">
    <location>
        <position position="112"/>
    </location>
</feature>
<feature type="modified residue" description="Omega-N-methylarginine" evidence="1">
    <location>
        <position position="147"/>
    </location>
</feature>
<feature type="modified residue" description="Omega-N-methylarginine" evidence="3">
    <location>
        <position position="172"/>
    </location>
</feature>
<organism>
    <name type="scientific">Monodelphis domestica</name>
    <name type="common">Gray short-tailed opossum</name>
    <dbReference type="NCBI Taxonomy" id="13616"/>
    <lineage>
        <taxon>Eukaryota</taxon>
        <taxon>Metazoa</taxon>
        <taxon>Chordata</taxon>
        <taxon>Craniata</taxon>
        <taxon>Vertebrata</taxon>
        <taxon>Euteleostomi</taxon>
        <taxon>Mammalia</taxon>
        <taxon>Metatheria</taxon>
        <taxon>Didelphimorphia</taxon>
        <taxon>Didelphidae</taxon>
        <taxon>Monodelphis</taxon>
    </lineage>
</organism>
<dbReference type="EMBL" id="AF134827">
    <property type="protein sequence ID" value="AAD54482.1"/>
    <property type="molecule type" value="mRNA"/>
</dbReference>
<dbReference type="RefSeq" id="NP_001029144.1">
    <property type="nucleotide sequence ID" value="NM_001033972.1"/>
</dbReference>
<dbReference type="SMR" id="Q9TU66"/>
<dbReference type="STRING" id="13616.ENSMODP00000049062"/>
<dbReference type="GeneID" id="554245"/>
<dbReference type="KEGG" id="mdo:554245"/>
<dbReference type="CTD" id="6628"/>
<dbReference type="eggNOG" id="KOG3168">
    <property type="taxonomic scope" value="Eukaryota"/>
</dbReference>
<dbReference type="InParanoid" id="Q9TU66"/>
<dbReference type="OrthoDB" id="2020720at2759"/>
<dbReference type="Proteomes" id="UP000002280">
    <property type="component" value="Unplaced"/>
</dbReference>
<dbReference type="GO" id="GO:0071013">
    <property type="term" value="C:catalytic step 2 spliceosome"/>
    <property type="evidence" value="ECO:0000318"/>
    <property type="project" value="GO_Central"/>
</dbReference>
<dbReference type="GO" id="GO:0005737">
    <property type="term" value="C:cytoplasm"/>
    <property type="evidence" value="ECO:0000318"/>
    <property type="project" value="GO_Central"/>
</dbReference>
<dbReference type="GO" id="GO:0005829">
    <property type="term" value="C:cytosol"/>
    <property type="evidence" value="ECO:0000250"/>
    <property type="project" value="UniProtKB"/>
</dbReference>
<dbReference type="GO" id="GO:0034709">
    <property type="term" value="C:methylosome"/>
    <property type="evidence" value="ECO:0000250"/>
    <property type="project" value="UniProtKB"/>
</dbReference>
<dbReference type="GO" id="GO:0005634">
    <property type="term" value="C:nucleus"/>
    <property type="evidence" value="ECO:0000250"/>
    <property type="project" value="UniProtKB"/>
</dbReference>
<dbReference type="GO" id="GO:0034719">
    <property type="term" value="C:SMN-Sm protein complex"/>
    <property type="evidence" value="ECO:0000250"/>
    <property type="project" value="UniProtKB"/>
</dbReference>
<dbReference type="GO" id="GO:0005685">
    <property type="term" value="C:U1 snRNP"/>
    <property type="evidence" value="ECO:0000250"/>
    <property type="project" value="UniProtKB"/>
</dbReference>
<dbReference type="GO" id="GO:0005686">
    <property type="term" value="C:U2 snRNP"/>
    <property type="evidence" value="ECO:0000318"/>
    <property type="project" value="GO_Central"/>
</dbReference>
<dbReference type="GO" id="GO:0071007">
    <property type="term" value="C:U2-type catalytic step 2 spliceosome"/>
    <property type="evidence" value="ECO:0000250"/>
    <property type="project" value="UniProtKB"/>
</dbReference>
<dbReference type="GO" id="GO:0071005">
    <property type="term" value="C:U2-type precatalytic spliceosome"/>
    <property type="evidence" value="ECO:0000250"/>
    <property type="project" value="UniProtKB"/>
</dbReference>
<dbReference type="GO" id="GO:0071004">
    <property type="term" value="C:U2-type prespliceosome"/>
    <property type="evidence" value="ECO:0000318"/>
    <property type="project" value="GO_Central"/>
</dbReference>
<dbReference type="GO" id="GO:0005684">
    <property type="term" value="C:U2-type spliceosomal complex"/>
    <property type="evidence" value="ECO:0000250"/>
    <property type="project" value="UniProtKB"/>
</dbReference>
<dbReference type="GO" id="GO:0005687">
    <property type="term" value="C:U4 snRNP"/>
    <property type="evidence" value="ECO:0000250"/>
    <property type="project" value="UniProtKB"/>
</dbReference>
<dbReference type="GO" id="GO:0046540">
    <property type="term" value="C:U4/U6 x U5 tri-snRNP complex"/>
    <property type="evidence" value="ECO:0000250"/>
    <property type="project" value="UniProtKB"/>
</dbReference>
<dbReference type="GO" id="GO:0005682">
    <property type="term" value="C:U5 snRNP"/>
    <property type="evidence" value="ECO:0000318"/>
    <property type="project" value="GO_Central"/>
</dbReference>
<dbReference type="GO" id="GO:0005683">
    <property type="term" value="C:U7 snRNP"/>
    <property type="evidence" value="ECO:0000250"/>
    <property type="project" value="UniProtKB"/>
</dbReference>
<dbReference type="GO" id="GO:0003723">
    <property type="term" value="F:RNA binding"/>
    <property type="evidence" value="ECO:0007669"/>
    <property type="project" value="UniProtKB-KW"/>
</dbReference>
<dbReference type="GO" id="GO:0070990">
    <property type="term" value="F:snRNP binding"/>
    <property type="evidence" value="ECO:0000318"/>
    <property type="project" value="GO_Central"/>
</dbReference>
<dbReference type="GO" id="GO:0000398">
    <property type="term" value="P:mRNA splicing, via spliceosome"/>
    <property type="evidence" value="ECO:0000250"/>
    <property type="project" value="UniProtKB"/>
</dbReference>
<dbReference type="GO" id="GO:0000387">
    <property type="term" value="P:spliceosomal snRNP assembly"/>
    <property type="evidence" value="ECO:0000250"/>
    <property type="project" value="UniProtKB"/>
</dbReference>
<dbReference type="CDD" id="cd01717">
    <property type="entry name" value="Sm_B"/>
    <property type="match status" value="1"/>
</dbReference>
<dbReference type="FunFam" id="2.30.30.100:FF:000004">
    <property type="entry name" value="Small nuclear ribonucleoprotein-associated proteins"/>
    <property type="match status" value="1"/>
</dbReference>
<dbReference type="Gene3D" id="2.30.30.100">
    <property type="match status" value="1"/>
</dbReference>
<dbReference type="InterPro" id="IPR010920">
    <property type="entry name" value="LSM_dom_sf"/>
</dbReference>
<dbReference type="InterPro" id="IPR047575">
    <property type="entry name" value="Sm"/>
</dbReference>
<dbReference type="InterPro" id="IPR001163">
    <property type="entry name" value="Sm_dom_euk/arc"/>
</dbReference>
<dbReference type="InterPro" id="IPR017131">
    <property type="entry name" value="snRNP-assoc_SmB/SmN"/>
</dbReference>
<dbReference type="PANTHER" id="PTHR14508">
    <property type="entry name" value="SNRPN UPSTREAM READING FRAME PROTEIN, SNURF"/>
    <property type="match status" value="1"/>
</dbReference>
<dbReference type="PANTHER" id="PTHR14508:SF2">
    <property type="entry name" value="SNRPN UPSTREAM READING FRAME PROTEIN-RELATED"/>
    <property type="match status" value="1"/>
</dbReference>
<dbReference type="Pfam" id="PF01423">
    <property type="entry name" value="LSM"/>
    <property type="match status" value="1"/>
</dbReference>
<dbReference type="PIRSF" id="PIRSF037187">
    <property type="entry name" value="snRNP_SmB/SmN"/>
    <property type="match status" value="1"/>
</dbReference>
<dbReference type="SMART" id="SM00651">
    <property type="entry name" value="Sm"/>
    <property type="match status" value="1"/>
</dbReference>
<dbReference type="SUPFAM" id="SSF50182">
    <property type="entry name" value="Sm-like ribonucleoproteins"/>
    <property type="match status" value="1"/>
</dbReference>
<dbReference type="PROSITE" id="PS52002">
    <property type="entry name" value="SM"/>
    <property type="match status" value="1"/>
</dbReference>
<comment type="function">
    <text evidence="1">Plays a role in pre-mRNA splicing as a core component of the spliceosomal U1, U2, U4 and U5 small nuclear ribonucleoproteins (snRNPs), the building blocks of the spliceosome (By similarity). Component of both the pre-catalytic spliceosome B complex and activated spliceosome C complexes (By similarity). As a component of the minor spliceosome, involved in the splicing of U12-type introns in pre-mRNAs (By similarity). As part of the U7 snRNP it is involved in histone pre-mRNA 3'-end processing (By similarity).</text>
</comment>
<comment type="subunit">
    <text evidence="1 2">Core component of the spliceosomal U1, U2, U4 and U5 small nuclear ribonucleoproteins (snRNPs), the building blocks of the spliceosome (By similarity). Most spliceosomal snRNPs contain a common set of Sm proteins, SNRPB, SNRPD1, SNRPD2, SNRPD3, SNRPE, SNRPF and SNRPG that assemble in a heptameric protein ring on the Sm site of the small nuclear RNA to form the core snRNP (By similarity). Component of the U1 snRNP (By similarity). The U1 snRNP is composed of the U1 snRNA and the 7 core Sm proteins SNRPB, SNRPD1, SNRPD2, SNRPD3, SNRPE, SNRPF and SNRPG, and at least three U1 snRNP-specific proteins SNRNP70/U1-70K, SNRPA/U1-A and SNRPC/U1-C (By similarity). Component of the U4/U6-U5 tri-snRNP complex composed of the U4, U6 and U5 snRNAs and at least PRPF3, PRPF4, PRPF6, PRPF8, PRPF31, SNRNP200, TXNL4A, SNRNP40, SNRPB, SNRPD1, SNRPD2, SNRPD3, SNRPE, SNRPF, SNRPG, DDX23, CD2BP2, PPIH, SNU13, EFTUD2, SART1 and USP39, plus LSM2, LSM3, LSM4, LSM5, LSM6, LSM7 and LSM8 (By similarity). Component of the U7 snRNP complex, or U7 Sm protein core complex, that is composed of the U7 snRNA and at least LSM10, LSM11, SNRPB, SNRPD3, SNRPE, SNRPF and SNRPG; the complex does not contain SNRPD1 and SNRPD2 (By similarity). Component of the minor spliceosome, which splices U12-type introns (By similarity). Part of the SMN-Sm complex that contains SMN1, GEMIN2/SIP1, DDX20/GEMIN3, GEMIN4, GEMIN5, GEMIN6, GEMIN7, GEMIN8, STRAP/UNRIP and the Sm proteins SNRPB, SNRPD1, SNRPD2, SNRPD3, SNRPE, SNRPF and SNRPG; catalyzes core snRNPs assembly (By similarity). Forms a 6S pICln-Sm complex composed of CLNS1A/pICln, SNRPD1, SNRPD2, SNRPE, SNRPF and SNRPG; ring-like structure where CLNS1A/pICln mimics additional Sm proteins and which is unable to assemble into the core snRNP (By similarity). Identified in a histone pre-mRNA complex, at least composed of ERI1, LSM11, SLBP, SNRPB, SYNCRIP and YBX1 (By similarity). Interacts with TDRD3 and SNUPN (By similarity). Interacts with PRMT5; interaction leads to its symmetric arginine dimethylation (By similarity). Interacts with TDRD6; interaction promotes association with PRMT5 (By similarity). Interacts with SMN1; the interaction is direct (By similarity).</text>
</comment>
<comment type="subcellular location">
    <subcellularLocation>
        <location evidence="1">Cytoplasm</location>
        <location evidence="1">Cytosol</location>
    </subcellularLocation>
    <subcellularLocation>
        <location evidence="1">Nucleus</location>
    </subcellularLocation>
    <text evidence="1">SMN-mediated assembly into core snRNPs occurs in the cytosol before SMN-mediated transport to the nucleus to be included in spliceosomes.</text>
</comment>
<comment type="PTM">
    <text evidence="1 2">Methylated by PRMT5 (By similarity). Arg-108 and Arg-112 are dimethylated, probably to asymmetric dimethylarginine (By similarity).</text>
</comment>
<comment type="similarity">
    <text evidence="6">Belongs to the snRNP SmB/SmN family.</text>
</comment>